<reference key="1">
    <citation type="journal article" date="1999" name="Gene">
        <title>Characterisation of XlCdc1, a Xenopus homologue of the small (PolD2) subunit of DNA polymerase delta; identification of ten conserved regions I-X based on protein sequence comparisons across ten eukaryotic species.</title>
        <authorList>
            <person name="Reynolds N."/>
            <person name="MacNeill S.A."/>
        </authorList>
    </citation>
    <scope>NUCLEOTIDE SEQUENCE [MRNA]</scope>
</reference>
<reference key="2">
    <citation type="submission" date="2003-02" db="EMBL/GenBank/DDBJ databases">
        <authorList>
            <consortium name="NIH - Xenopus Gene Collection (XGC) project"/>
        </authorList>
    </citation>
    <scope>NUCLEOTIDE SEQUENCE [LARGE SCALE MRNA]</scope>
    <source>
        <tissue>Embryo</tissue>
    </source>
</reference>
<comment type="function">
    <text evidence="1">As a component of the trimeric and tetrameric DNA polymerase delta complexes (Pol-delta3 and Pol-delta4, respectively), plays a role in high fidelity genome replication, including in lagging strand synthesis, and repair. Pol-delta3 and Pol-delta4 are characterized by the absence or the presence of POLD4. They exhibit differences in catalytic activity. Most notably, Pol-delta3 shows higher proofreading activity than Pol-delta4. Although both Pol-delta3 and Pol-delta4 process Okazaki fragments in vitro, Pol-delta3 may also be better suited to fulfill this task, exhibiting near-absence of strand displacement activity compared to Pol-delta4 and stalling on encounter with the 5'-blocking oligonucleotides. Pol-delta3 idling process may avoid the formation of a gap, while maintaining a nick that can be readily ligated. Along with DNA polymerase kappa, DNA polymerase delta carries out approximately half of nucleotide excision repair (NER) synthesis following UV irradiation. Under conditions of DNA replication stress, required for the repair of broken replication forks through break-induced replication (BIR). Involved in the translesion synthesis (TLS) of templates carrying O6-methylguanine or abasic sites performed by Pol-delta4, independently of DNA polymerase zeta (REV3L) or eta (POLH). Facilitates abasic site bypass by DNA polymerase delta by promoting extension from the nucleotide inserted opposite the lesion. Also involved in TLS as a component of the POLZ complex. Along with POLD3, dramatically increases the efficiency and processivity of DNA synthesis of the minimal DNA polymerase zeta complex, consisting of only REV3L and REV7.</text>
</comment>
<comment type="subunit">
    <text evidence="1">Component of the tetrameric DNA polymerase delta complex (Pol-delta4), which consists of POLD1/p125, POLD2/p50, POLD3/p66/p68 and POLD4/p12, with POLD1 bearing DNA polymerase and 3' to 5' proofreading exonuclease activities. Following stress caused by DNA damaging agents or by replication stress, POLD4 is degraded and Pol-delta4 is converted into a trimeric form of the complex (Pol-delta3), which consists of POLD1, POLD2 and POLD3. Pol-delta3 is the major form occurring at S phase replication sites, as well as DNA damage sites. Also observed as a dimeric complex with POLD2 (Pol-delta2 complex). Component of the DNA polymerase zeta complex (POLZ), which consists of REV3L, MAD2L2, POLD2 and POLD3, with REV3L bearing DNA polymerase catalytic activity.</text>
</comment>
<comment type="subcellular location">
    <subcellularLocation>
        <location evidence="1">Nucleus</location>
    </subcellularLocation>
    <text evidence="1">Recruited to DNA damage sites within 2 hours following UV irradiation.</text>
</comment>
<comment type="similarity">
    <text evidence="2">Belongs to the DNA polymerase delta/II small subunit family.</text>
</comment>
<protein>
    <recommendedName>
        <fullName>DNA polymerase delta subunit 2</fullName>
    </recommendedName>
    <alternativeName>
        <fullName>XlCdc1</fullName>
    </alternativeName>
</protein>
<evidence type="ECO:0000250" key="1">
    <source>
        <dbReference type="UniProtKB" id="P49005"/>
    </source>
</evidence>
<evidence type="ECO:0000305" key="2"/>
<sequence>MFTDLAISGGPGLLTAPSEVQSTFTRVSNTQYSNCSSIFRLGERTFTRQYAHIYATRLEQMRPLLIKSAKQRWGDDIAVRKLCELQGGEKCCVIGTLFKSMELQPSILREISEEHNLLPQPARQKYISDSDELILEDELQRIKLEGATDVQQLVTGAVLAVLGAEEDAGKFVVEDFCLTSLPVQSPLPRLSEDRFVLLTSGLGLGGGSGDSLMGLQLLLDLVTGQAGAEEDQGCAARISRVILAGNLLSENTQGKDSLNKAKYLSKKTQAASVEAVKMLDEILLQMSGSVSVDVMPGAFDPTNYILPQQPLHRCMFPQSALYSTLQLVTNPYEAEIDGVRFLGTSGQNIGDIYKYSSMQDYLDILEWTLQVGHLCPTAPDTLGCYPFYKSDPFILQNCPHVYFCGSAPKFSCKEVTGAEGQRVLLLTVPEFCSTQTACLVNLRTLQCQPISFSGFGADDELGD</sequence>
<proteinExistence type="evidence at transcript level"/>
<keyword id="KW-0227">DNA damage</keyword>
<keyword id="KW-0228">DNA excision</keyword>
<keyword id="KW-0234">DNA repair</keyword>
<keyword id="KW-0235">DNA replication</keyword>
<keyword id="KW-0539">Nucleus</keyword>
<keyword id="KW-1185">Reference proteome</keyword>
<dbReference type="EMBL" id="AJ010836">
    <property type="protein sequence ID" value="CAA09373.1"/>
    <property type="molecule type" value="mRNA"/>
</dbReference>
<dbReference type="EMBL" id="BC047262">
    <property type="protein sequence ID" value="AAH47262.1"/>
    <property type="molecule type" value="mRNA"/>
</dbReference>
<dbReference type="RefSeq" id="NP_001080101.1">
    <property type="nucleotide sequence ID" value="NM_001086632.1"/>
</dbReference>
<dbReference type="SMR" id="O93610"/>
<dbReference type="BioGRID" id="98035">
    <property type="interactions" value="2"/>
</dbReference>
<dbReference type="IntAct" id="O93610">
    <property type="interactions" value="2"/>
</dbReference>
<dbReference type="DNASU" id="379793"/>
<dbReference type="GeneID" id="379793"/>
<dbReference type="KEGG" id="xla:379793"/>
<dbReference type="AGR" id="Xenbase:XB-GENE-999393"/>
<dbReference type="CTD" id="379793"/>
<dbReference type="Xenbase" id="XB-GENE-999393">
    <property type="gene designation" value="pold2.L"/>
</dbReference>
<dbReference type="OrthoDB" id="3763at2759"/>
<dbReference type="Proteomes" id="UP000186698">
    <property type="component" value="Chromosome 3L"/>
</dbReference>
<dbReference type="Bgee" id="379793">
    <property type="expression patterns" value="Expressed in oocyte and 19 other cell types or tissues"/>
</dbReference>
<dbReference type="GO" id="GO:0043625">
    <property type="term" value="C:delta DNA polymerase complex"/>
    <property type="evidence" value="ECO:0000318"/>
    <property type="project" value="GO_Central"/>
</dbReference>
<dbReference type="GO" id="GO:0003677">
    <property type="term" value="F:DNA binding"/>
    <property type="evidence" value="ECO:0007669"/>
    <property type="project" value="InterPro"/>
</dbReference>
<dbReference type="GO" id="GO:0006281">
    <property type="term" value="P:DNA repair"/>
    <property type="evidence" value="ECO:0007669"/>
    <property type="project" value="UniProtKB-KW"/>
</dbReference>
<dbReference type="GO" id="GO:0006271">
    <property type="term" value="P:DNA strand elongation involved in DNA replication"/>
    <property type="evidence" value="ECO:0000318"/>
    <property type="project" value="GO_Central"/>
</dbReference>
<dbReference type="CDD" id="cd07387">
    <property type="entry name" value="MPP_PolD2_C"/>
    <property type="match status" value="1"/>
</dbReference>
<dbReference type="FunFam" id="3.60.21.50:FF:000001">
    <property type="entry name" value="DNA polymerase delta 2, accessory subunit"/>
    <property type="match status" value="1"/>
</dbReference>
<dbReference type="FunFam" id="2.40.50.430:FF:000001">
    <property type="entry name" value="DNA polymerase delta subunit 2"/>
    <property type="match status" value="1"/>
</dbReference>
<dbReference type="Gene3D" id="2.40.50.430">
    <property type="match status" value="1"/>
</dbReference>
<dbReference type="Gene3D" id="3.60.21.50">
    <property type="match status" value="1"/>
</dbReference>
<dbReference type="InterPro" id="IPR007185">
    <property type="entry name" value="DNA_pol_a/d/e_bsu"/>
</dbReference>
<dbReference type="InterPro" id="IPR040663">
    <property type="entry name" value="DNA_pol_D_N"/>
</dbReference>
<dbReference type="InterPro" id="IPR024826">
    <property type="entry name" value="DNA_pol_delta/II_ssu"/>
</dbReference>
<dbReference type="InterPro" id="IPR041863">
    <property type="entry name" value="PolD2_C"/>
</dbReference>
<dbReference type="PANTHER" id="PTHR10416">
    <property type="entry name" value="DNA POLYMERASE DELTA SUBUNIT 2"/>
    <property type="match status" value="1"/>
</dbReference>
<dbReference type="PANTHER" id="PTHR10416:SF0">
    <property type="entry name" value="DNA POLYMERASE DELTA SUBUNIT 2"/>
    <property type="match status" value="1"/>
</dbReference>
<dbReference type="Pfam" id="PF18018">
    <property type="entry name" value="DNA_pol_D_N"/>
    <property type="match status" value="1"/>
</dbReference>
<dbReference type="Pfam" id="PF04042">
    <property type="entry name" value="DNA_pol_E_B"/>
    <property type="match status" value="1"/>
</dbReference>
<feature type="chain" id="PRO_0000096168" description="DNA polymerase delta subunit 2">
    <location>
        <begin position="1"/>
        <end position="463"/>
    </location>
</feature>
<accession>O93610</accession>
<accession>Q5D0A2</accession>
<gene>
    <name type="primary">pold2</name>
    <name type="synonym">cdc1</name>
</gene>
<organism>
    <name type="scientific">Xenopus laevis</name>
    <name type="common">African clawed frog</name>
    <dbReference type="NCBI Taxonomy" id="8355"/>
    <lineage>
        <taxon>Eukaryota</taxon>
        <taxon>Metazoa</taxon>
        <taxon>Chordata</taxon>
        <taxon>Craniata</taxon>
        <taxon>Vertebrata</taxon>
        <taxon>Euteleostomi</taxon>
        <taxon>Amphibia</taxon>
        <taxon>Batrachia</taxon>
        <taxon>Anura</taxon>
        <taxon>Pipoidea</taxon>
        <taxon>Pipidae</taxon>
        <taxon>Xenopodinae</taxon>
        <taxon>Xenopus</taxon>
        <taxon>Xenopus</taxon>
    </lineage>
</organism>
<name>DPOD2_XENLA</name>